<proteinExistence type="inferred from homology"/>
<evidence type="ECO:0000250" key="1">
    <source>
        <dbReference type="UniProtKB" id="Q12051"/>
    </source>
</evidence>
<evidence type="ECO:0000269" key="2">
    <source>
    </source>
</evidence>
<evidence type="ECO:0000303" key="3">
    <source>
    </source>
</evidence>
<evidence type="ECO:0000305" key="4"/>
<comment type="function">
    <text evidence="2">Geranylgeranyl pyrophosphate synthase; part of the gene cluster that mediates the biosynthesis of the indole diterpenes penitrems (PubMed:25831977). The geranylgeranyl diphosphate (GGPP) synthase ptmG catalyzes the first step in penitrem biosynthesis via conversion of farnesyl pyrophosphate and isopentyl pyrophosphate into geranylgeranyl pyrophosphate (GGPP) (PubMed:25831977). Condensation of indole-3-glycerol phosphate with GGPP by the prenyl transferase ptmC then forms 3-geranylgeranylindole (3-GGI) (PubMed:25831977). Epoxidation by the FAD-dependent monooxygenase ptmM leads to a epoxidized-GGI that is substrate of the terpene cyclase ptmB for cyclization to yield paspaline (PubMed:25831977). Paspaline is subsequently converted to 13-desoxypaxilline by the cytochrome P450 monooxygenase ptmP, the latter being then converted to paxilline by the cytochrome P450 monooxygenase ptmQ (PubMed:25831977). Paxilline is converted to beta-paxitriol via C-10 ketoreduction by the short-chain dehydrogenase ptmH which can be monoprenylated at the C-20 by the indole diterpene prenyltransferase ptmD (PubMed:25831977). A two-step elimination (acetylation and elimination) process performed by the O-acetyltransferase ptmV and ptmI leads to the production of the prenylated form of penijanthine (PubMed:25831977). The FAD-linked oxidoreductase ptmO then converts the prenylated form of penijanthine into PC-M5 which is in turn transformed into PC-M4 by the aromatic dimethylallyltransferase ptmE (PubMed:25831977). Five sequential oxidative transformations performed by the cytochrome P450 monooxygenases ptmK, ptmU, ptmL, ptmN and ptmJ yield the various penitrem compounds. PtmK, ptmU and ptmM are involved in the formation of the key bicyclic ring of penitrem C via the formation of the intermediates secopenitrem D and penitrem D. PtmL catalyzes the epoxidation of penitrem D and C to yield penitrem B and F, respectively. PtmJ catalyzes the last benzylic hydroxylation to convert penitrem B to prenitrem E and penitrem F to penitrem A (PubMed:25831977).</text>
</comment>
<comment type="catalytic activity">
    <reaction evidence="1">
        <text>isopentenyl diphosphate + dimethylallyl diphosphate = (2E)-geranyl diphosphate + diphosphate</text>
        <dbReference type="Rhea" id="RHEA:22408"/>
        <dbReference type="ChEBI" id="CHEBI:33019"/>
        <dbReference type="ChEBI" id="CHEBI:57623"/>
        <dbReference type="ChEBI" id="CHEBI:58057"/>
        <dbReference type="ChEBI" id="CHEBI:128769"/>
        <dbReference type="EC" id="2.5.1.1"/>
    </reaction>
</comment>
<comment type="catalytic activity">
    <reaction evidence="1">
        <text>isopentenyl diphosphate + (2E)-geranyl diphosphate = (2E,6E)-farnesyl diphosphate + diphosphate</text>
        <dbReference type="Rhea" id="RHEA:19361"/>
        <dbReference type="ChEBI" id="CHEBI:33019"/>
        <dbReference type="ChEBI" id="CHEBI:58057"/>
        <dbReference type="ChEBI" id="CHEBI:128769"/>
        <dbReference type="ChEBI" id="CHEBI:175763"/>
        <dbReference type="EC" id="2.5.1.10"/>
    </reaction>
</comment>
<comment type="catalytic activity">
    <reaction evidence="1">
        <text>isopentenyl diphosphate + (2E,6E)-farnesyl diphosphate = (2E,6E,10E)-geranylgeranyl diphosphate + diphosphate</text>
        <dbReference type="Rhea" id="RHEA:17653"/>
        <dbReference type="ChEBI" id="CHEBI:33019"/>
        <dbReference type="ChEBI" id="CHEBI:58756"/>
        <dbReference type="ChEBI" id="CHEBI:128769"/>
        <dbReference type="ChEBI" id="CHEBI:175763"/>
        <dbReference type="EC" id="2.5.1.29"/>
    </reaction>
</comment>
<comment type="cofactor">
    <cofactor evidence="1">
        <name>Mg(2+)</name>
        <dbReference type="ChEBI" id="CHEBI:18420"/>
    </cofactor>
    <text evidence="1">Binds 3 Mg(2+) ions per subunit.</text>
</comment>
<comment type="pathway">
    <text evidence="2">Secondary metabolite biosynthesis.</text>
</comment>
<comment type="similarity">
    <text evidence="4">Belongs to the FPP/GGPP synthase family.</text>
</comment>
<keyword id="KW-0460">Magnesium</keyword>
<keyword id="KW-0479">Metal-binding</keyword>
<keyword id="KW-0808">Transferase</keyword>
<reference key="1">
    <citation type="journal article" date="2015" name="Angew. Chem. Int. Ed.">
        <title>Reconstitution of biosynthetic machinery for the synthesis of the highly elaborated indole diterpene penitrem.</title>
        <authorList>
            <person name="Liu C."/>
            <person name="Tagami K."/>
            <person name="Minami A."/>
            <person name="Matsumoto T."/>
            <person name="Frisvad J.C."/>
            <person name="Suzuki H."/>
            <person name="Ishikawa J."/>
            <person name="Gomi K."/>
            <person name="Oikawa H."/>
        </authorList>
    </citation>
    <scope>NUCLEOTIDE SEQUENCE [GENOMIC DNA]</scope>
    <scope>IDENTIFICATION</scope>
    <scope>FUNCTION</scope>
    <scope>PATHWAY</scope>
    <source>
        <strain>ATCC 90288 / AK-40</strain>
    </source>
</reference>
<feature type="chain" id="PRO_0000446553" description="Geranylgeranyl pyrophosphate synthase penG">
    <location>
        <begin position="1"/>
        <end position="356"/>
    </location>
</feature>
<feature type="binding site" evidence="1">
    <location>
        <position position="83"/>
    </location>
    <ligand>
        <name>isopentenyl diphosphate</name>
        <dbReference type="ChEBI" id="CHEBI:128769"/>
    </ligand>
</feature>
<feature type="binding site" evidence="1">
    <location>
        <position position="86"/>
    </location>
    <ligand>
        <name>isopentenyl diphosphate</name>
        <dbReference type="ChEBI" id="CHEBI:128769"/>
    </ligand>
</feature>
<feature type="binding site" evidence="1">
    <location>
        <position position="115"/>
    </location>
    <ligand>
        <name>isopentenyl diphosphate</name>
        <dbReference type="ChEBI" id="CHEBI:128769"/>
    </ligand>
</feature>
<feature type="binding site" evidence="1">
    <location>
        <position position="122"/>
    </location>
    <ligand>
        <name>Mg(2+)</name>
        <dbReference type="ChEBI" id="CHEBI:18420"/>
        <label>1</label>
    </ligand>
</feature>
<feature type="binding site" evidence="1">
    <location>
        <position position="122"/>
    </location>
    <ligand>
        <name>Mg(2+)</name>
        <dbReference type="ChEBI" id="CHEBI:18420"/>
        <label>2</label>
    </ligand>
</feature>
<feature type="binding site" evidence="1">
    <location>
        <position position="126"/>
    </location>
    <ligand>
        <name>Mg(2+)</name>
        <dbReference type="ChEBI" id="CHEBI:18420"/>
        <label>1</label>
    </ligand>
</feature>
<feature type="binding site" evidence="1">
    <location>
        <position position="126"/>
    </location>
    <ligand>
        <name>Mg(2+)</name>
        <dbReference type="ChEBI" id="CHEBI:18420"/>
        <label>2</label>
    </ligand>
</feature>
<feature type="binding site" evidence="1">
    <location>
        <position position="131"/>
    </location>
    <ligand>
        <name>dimethylallyl diphosphate</name>
        <dbReference type="ChEBI" id="CHEBI:57623"/>
    </ligand>
</feature>
<feature type="binding site" evidence="1">
    <location>
        <position position="132"/>
    </location>
    <ligand>
        <name>isopentenyl diphosphate</name>
        <dbReference type="ChEBI" id="CHEBI:128769"/>
    </ligand>
</feature>
<feature type="binding site" evidence="1">
    <location>
        <position position="209"/>
    </location>
    <ligand>
        <name>dimethylallyl diphosphate</name>
        <dbReference type="ChEBI" id="CHEBI:57623"/>
    </ligand>
</feature>
<feature type="binding site" evidence="1">
    <location>
        <position position="210"/>
    </location>
    <ligand>
        <name>dimethylallyl diphosphate</name>
        <dbReference type="ChEBI" id="CHEBI:57623"/>
    </ligand>
</feature>
<feature type="binding site" evidence="1">
    <location>
        <position position="243"/>
    </location>
    <ligand>
        <name>dimethylallyl diphosphate</name>
        <dbReference type="ChEBI" id="CHEBI:57623"/>
    </ligand>
</feature>
<feature type="binding site" evidence="1">
    <location>
        <position position="246"/>
    </location>
    <ligand>
        <name>Mg(2+)</name>
        <dbReference type="ChEBI" id="CHEBI:18420"/>
        <label>3</label>
    </ligand>
</feature>
<feature type="binding site" evidence="1">
    <location>
        <position position="250"/>
    </location>
    <ligand>
        <name>dimethylallyl diphosphate</name>
        <dbReference type="ChEBI" id="CHEBI:57623"/>
    </ligand>
</feature>
<feature type="binding site" evidence="1">
    <location>
        <position position="260"/>
    </location>
    <ligand>
        <name>dimethylallyl diphosphate</name>
        <dbReference type="ChEBI" id="CHEBI:57623"/>
    </ligand>
</feature>
<feature type="binding site" evidence="1">
    <location>
        <position position="270"/>
    </location>
    <ligand>
        <name>dimethylallyl diphosphate</name>
        <dbReference type="ChEBI" id="CHEBI:57623"/>
    </ligand>
</feature>
<feature type="site" description="Important for determining product chain length" evidence="1">
    <location>
        <position position="154"/>
    </location>
</feature>
<organism>
    <name type="scientific">Penicillium ochrochloron</name>
    <dbReference type="NCBI Taxonomy" id="69780"/>
    <lineage>
        <taxon>Eukaryota</taxon>
        <taxon>Fungi</taxon>
        <taxon>Dikarya</taxon>
        <taxon>Ascomycota</taxon>
        <taxon>Pezizomycotina</taxon>
        <taxon>Eurotiomycetes</taxon>
        <taxon>Eurotiomycetidae</taxon>
        <taxon>Eurotiales</taxon>
        <taxon>Aspergillaceae</taxon>
        <taxon>Penicillium</taxon>
    </lineage>
</organism>
<gene>
    <name evidence="3" type="primary">ptmG</name>
</gene>
<sequence length="356" mass="40178">MLFLAPGYIFPHVATPVTVAIDFAQAVKEGAYSFLDLKASPVPNPELFQPPSRVSIGMTGGREERNEEIIRGPLNYLLSLPGKDIRGKLIDALNEWFRVPEDKLSTIKEIIVILHTASLLIDDIQDSSQLRRGNPVAHRIFGVAQTINSANYAYFLAQAKLADLNDSRAFDIFTKGLLKLHRGQGMELYWRDNLICPTEEEYVEMVSCKTGGLFYLAVQLMQLNSEVTVNFSSFINLLGIIFQIRDDYMNLQSGTMTKTKGFSEDLTEGKFGYPIIHSIHAAPNDQQLIQILKLKTNDEVIKQYAVRYIESTGSFIYCREKLDLYLQEANETFQGLELLLGPSKGIRAILNFLRTR</sequence>
<dbReference type="EC" id="2.5.1.-" evidence="2"/>
<dbReference type="EC" id="2.5.1.1" evidence="1"/>
<dbReference type="EC" id="2.5.1.29" evidence="1"/>
<dbReference type="EC" id="2.5.1.10" evidence="1"/>
<dbReference type="EMBL" id="LC027936">
    <property type="protein sequence ID" value="BAU61549.1"/>
    <property type="molecule type" value="Genomic_DNA"/>
</dbReference>
<dbReference type="SMR" id="A0A140JWS2"/>
<dbReference type="GO" id="GO:0004337">
    <property type="term" value="F:(2E,6E)-farnesyl diphosphate synthase activity"/>
    <property type="evidence" value="ECO:0007669"/>
    <property type="project" value="UniProtKB-EC"/>
</dbReference>
<dbReference type="GO" id="GO:0004161">
    <property type="term" value="F:dimethylallyltranstransferase activity"/>
    <property type="evidence" value="ECO:0007669"/>
    <property type="project" value="UniProtKB-EC"/>
</dbReference>
<dbReference type="GO" id="GO:0004311">
    <property type="term" value="F:geranylgeranyl diphosphate synthase activity"/>
    <property type="evidence" value="ECO:0007669"/>
    <property type="project" value="UniProtKB-EC"/>
</dbReference>
<dbReference type="GO" id="GO:0046872">
    <property type="term" value="F:metal ion binding"/>
    <property type="evidence" value="ECO:0007669"/>
    <property type="project" value="UniProtKB-KW"/>
</dbReference>
<dbReference type="GO" id="GO:0046165">
    <property type="term" value="P:alcohol biosynthetic process"/>
    <property type="evidence" value="ECO:0007669"/>
    <property type="project" value="UniProtKB-ARBA"/>
</dbReference>
<dbReference type="GO" id="GO:0008299">
    <property type="term" value="P:isoprenoid biosynthetic process"/>
    <property type="evidence" value="ECO:0007669"/>
    <property type="project" value="InterPro"/>
</dbReference>
<dbReference type="GO" id="GO:0043386">
    <property type="term" value="P:mycotoxin biosynthetic process"/>
    <property type="evidence" value="ECO:0007669"/>
    <property type="project" value="UniProtKB-ARBA"/>
</dbReference>
<dbReference type="CDD" id="cd00685">
    <property type="entry name" value="Trans_IPPS_HT"/>
    <property type="match status" value="1"/>
</dbReference>
<dbReference type="Gene3D" id="1.10.600.10">
    <property type="entry name" value="Farnesyl Diphosphate Synthase"/>
    <property type="match status" value="1"/>
</dbReference>
<dbReference type="InterPro" id="IPR008949">
    <property type="entry name" value="Isoprenoid_synthase_dom_sf"/>
</dbReference>
<dbReference type="InterPro" id="IPR000092">
    <property type="entry name" value="Polyprenyl_synt"/>
</dbReference>
<dbReference type="InterPro" id="IPR033749">
    <property type="entry name" value="Polyprenyl_synt_CS"/>
</dbReference>
<dbReference type="PANTHER" id="PTHR12001">
    <property type="entry name" value="GERANYLGERANYL PYROPHOSPHATE SYNTHASE"/>
    <property type="match status" value="1"/>
</dbReference>
<dbReference type="PANTHER" id="PTHR12001:SF70">
    <property type="entry name" value="PYROPHOSPHATE SYNTHETASE ATMG, PUTATIVE (AFU_ORTHOLOGUE AFUA_8G02400)-RELATED"/>
    <property type="match status" value="1"/>
</dbReference>
<dbReference type="Pfam" id="PF00348">
    <property type="entry name" value="polyprenyl_synt"/>
    <property type="match status" value="1"/>
</dbReference>
<dbReference type="SFLD" id="SFLDS00005">
    <property type="entry name" value="Isoprenoid_Synthase_Type_I"/>
    <property type="match status" value="1"/>
</dbReference>
<dbReference type="SUPFAM" id="SSF48576">
    <property type="entry name" value="Terpenoid synthases"/>
    <property type="match status" value="1"/>
</dbReference>
<dbReference type="PROSITE" id="PS00723">
    <property type="entry name" value="POLYPRENYL_SYNTHASE_1"/>
    <property type="match status" value="1"/>
</dbReference>
<dbReference type="PROSITE" id="PS00444">
    <property type="entry name" value="POLYPRENYL_SYNTHASE_2"/>
    <property type="match status" value="1"/>
</dbReference>
<name>PTMG_PENOH</name>
<protein>
    <recommendedName>
        <fullName evidence="3">Geranylgeranyl pyrophosphate synthase penG</fullName>
        <shortName evidence="4">GGPP synthase</shortName>
        <shortName evidence="4">GGPPSase</shortName>
        <ecNumber evidence="2">2.5.1.-</ecNumber>
    </recommendedName>
    <alternativeName>
        <fullName evidence="1">(2E,6E)-farnesyl diphosphate synthase</fullName>
    </alternativeName>
    <alternativeName>
        <fullName evidence="1">Dimethylallyltranstransferase</fullName>
        <ecNumber evidence="1">2.5.1.1</ecNumber>
    </alternativeName>
    <alternativeName>
        <fullName evidence="1">Farnesyl diphosphate synthase</fullName>
    </alternativeName>
    <alternativeName>
        <fullName evidence="1">Farnesyltranstransferase</fullName>
        <ecNumber evidence="1">2.5.1.29</ecNumber>
    </alternativeName>
    <alternativeName>
        <fullName evidence="1">Geranylgeranyl diphosphate synthase</fullName>
    </alternativeName>
    <alternativeName>
        <fullName evidence="1">Geranyltranstransferase</fullName>
        <ecNumber evidence="1">2.5.1.10</ecNumber>
    </alternativeName>
    <alternativeName>
        <fullName evidence="3">Penitrem biosynthesis cluster 1 protein G</fullName>
    </alternativeName>
</protein>
<accession>A0A140JWS2</accession>